<organism>
    <name type="scientific">Oryza sativa subsp. japonica</name>
    <name type="common">Rice</name>
    <dbReference type="NCBI Taxonomy" id="39947"/>
    <lineage>
        <taxon>Eukaryota</taxon>
        <taxon>Viridiplantae</taxon>
        <taxon>Streptophyta</taxon>
        <taxon>Embryophyta</taxon>
        <taxon>Tracheophyta</taxon>
        <taxon>Spermatophyta</taxon>
        <taxon>Magnoliopsida</taxon>
        <taxon>Liliopsida</taxon>
        <taxon>Poales</taxon>
        <taxon>Poaceae</taxon>
        <taxon>BOP clade</taxon>
        <taxon>Oryzoideae</taxon>
        <taxon>Oryzeae</taxon>
        <taxon>Oryzinae</taxon>
        <taxon>Oryza</taxon>
        <taxon>Oryza sativa</taxon>
    </lineage>
</organism>
<name>APY3_ORYSJ</name>
<accession>Q2QYE1</accession>
<accession>A0A0P0Y6G6</accession>
<keyword id="KW-0067">ATP-binding</keyword>
<keyword id="KW-0106">Calcium</keyword>
<keyword id="KW-0325">Glycoprotein</keyword>
<keyword id="KW-0378">Hydrolase</keyword>
<keyword id="KW-0547">Nucleotide-binding</keyword>
<keyword id="KW-1185">Reference proteome</keyword>
<keyword id="KW-0964">Secreted</keyword>
<keyword id="KW-0732">Signal</keyword>
<protein>
    <recommendedName>
        <fullName>Probable apyrase 3</fullName>
        <shortName>OsAPY3</shortName>
        <ecNumber>3.6.1.5</ecNumber>
    </recommendedName>
    <alternativeName>
        <fullName>ATP-diphosphatase</fullName>
    </alternativeName>
    <alternativeName>
        <fullName>ATP-diphosphohydrolase</fullName>
    </alternativeName>
    <alternativeName>
        <fullName>Adenosine diphosphatase</fullName>
        <shortName>ADPase</shortName>
    </alternativeName>
</protein>
<reference key="1">
    <citation type="journal article" date="2005" name="BMC Biol.">
        <title>The sequence of rice chromosomes 11 and 12, rich in disease resistance genes and recent gene duplications.</title>
        <authorList>
            <consortium name="The rice chromosomes 11 and 12 sequencing consortia"/>
        </authorList>
    </citation>
    <scope>NUCLEOTIDE SEQUENCE [LARGE SCALE GENOMIC DNA]</scope>
    <source>
        <strain>cv. Nipponbare</strain>
    </source>
</reference>
<reference key="2">
    <citation type="journal article" date="2005" name="Nature">
        <title>The map-based sequence of the rice genome.</title>
        <authorList>
            <consortium name="International rice genome sequencing project (IRGSP)"/>
        </authorList>
    </citation>
    <scope>NUCLEOTIDE SEQUENCE [LARGE SCALE GENOMIC DNA]</scope>
    <source>
        <strain>cv. Nipponbare</strain>
    </source>
</reference>
<reference key="3">
    <citation type="journal article" date="2008" name="Nucleic Acids Res.">
        <title>The rice annotation project database (RAP-DB): 2008 update.</title>
        <authorList>
            <consortium name="The rice annotation project (RAP)"/>
        </authorList>
    </citation>
    <scope>GENOME REANNOTATION</scope>
    <source>
        <strain>cv. Nipponbare</strain>
    </source>
</reference>
<reference key="4">
    <citation type="journal article" date="2013" name="Rice">
        <title>Improvement of the Oryza sativa Nipponbare reference genome using next generation sequence and optical map data.</title>
        <authorList>
            <person name="Kawahara Y."/>
            <person name="de la Bastide M."/>
            <person name="Hamilton J.P."/>
            <person name="Kanamori H."/>
            <person name="McCombie W.R."/>
            <person name="Ouyang S."/>
            <person name="Schwartz D.C."/>
            <person name="Tanaka T."/>
            <person name="Wu J."/>
            <person name="Zhou S."/>
            <person name="Childs K.L."/>
            <person name="Davidson R.M."/>
            <person name="Lin H."/>
            <person name="Quesada-Ocampo L."/>
            <person name="Vaillancourt B."/>
            <person name="Sakai H."/>
            <person name="Lee S.S."/>
            <person name="Kim J."/>
            <person name="Numa H."/>
            <person name="Itoh T."/>
            <person name="Buell C.R."/>
            <person name="Matsumoto T."/>
        </authorList>
    </citation>
    <scope>GENOME REANNOTATION</scope>
    <source>
        <strain>cv. Nipponbare</strain>
    </source>
</reference>
<reference key="5">
    <citation type="journal article" date="2005" name="PLoS Biol.">
        <title>The genomes of Oryza sativa: a history of duplications.</title>
        <authorList>
            <person name="Yu J."/>
            <person name="Wang J."/>
            <person name="Lin W."/>
            <person name="Li S."/>
            <person name="Li H."/>
            <person name="Zhou J."/>
            <person name="Ni P."/>
            <person name="Dong W."/>
            <person name="Hu S."/>
            <person name="Zeng C."/>
            <person name="Zhang J."/>
            <person name="Zhang Y."/>
            <person name="Li R."/>
            <person name="Xu Z."/>
            <person name="Li S."/>
            <person name="Li X."/>
            <person name="Zheng H."/>
            <person name="Cong L."/>
            <person name="Lin L."/>
            <person name="Yin J."/>
            <person name="Geng J."/>
            <person name="Li G."/>
            <person name="Shi J."/>
            <person name="Liu J."/>
            <person name="Lv H."/>
            <person name="Li J."/>
            <person name="Wang J."/>
            <person name="Deng Y."/>
            <person name="Ran L."/>
            <person name="Shi X."/>
            <person name="Wang X."/>
            <person name="Wu Q."/>
            <person name="Li C."/>
            <person name="Ren X."/>
            <person name="Wang J."/>
            <person name="Wang X."/>
            <person name="Li D."/>
            <person name="Liu D."/>
            <person name="Zhang X."/>
            <person name="Ji Z."/>
            <person name="Zhao W."/>
            <person name="Sun Y."/>
            <person name="Zhang Z."/>
            <person name="Bao J."/>
            <person name="Han Y."/>
            <person name="Dong L."/>
            <person name="Ji J."/>
            <person name="Chen P."/>
            <person name="Wu S."/>
            <person name="Liu J."/>
            <person name="Xiao Y."/>
            <person name="Bu D."/>
            <person name="Tan J."/>
            <person name="Yang L."/>
            <person name="Ye C."/>
            <person name="Zhang J."/>
            <person name="Xu J."/>
            <person name="Zhou Y."/>
            <person name="Yu Y."/>
            <person name="Zhang B."/>
            <person name="Zhuang S."/>
            <person name="Wei H."/>
            <person name="Liu B."/>
            <person name="Lei M."/>
            <person name="Yu H."/>
            <person name="Li Y."/>
            <person name="Xu H."/>
            <person name="Wei S."/>
            <person name="He X."/>
            <person name="Fang L."/>
            <person name="Zhang Z."/>
            <person name="Zhang Y."/>
            <person name="Huang X."/>
            <person name="Su Z."/>
            <person name="Tong W."/>
            <person name="Li J."/>
            <person name="Tong Z."/>
            <person name="Li S."/>
            <person name="Ye J."/>
            <person name="Wang L."/>
            <person name="Fang L."/>
            <person name="Lei T."/>
            <person name="Chen C.-S."/>
            <person name="Chen H.-C."/>
            <person name="Xu Z."/>
            <person name="Li H."/>
            <person name="Huang H."/>
            <person name="Zhang F."/>
            <person name="Xu H."/>
            <person name="Li N."/>
            <person name="Zhao C."/>
            <person name="Li S."/>
            <person name="Dong L."/>
            <person name="Huang Y."/>
            <person name="Li L."/>
            <person name="Xi Y."/>
            <person name="Qi Q."/>
            <person name="Li W."/>
            <person name="Zhang B."/>
            <person name="Hu W."/>
            <person name="Zhang Y."/>
            <person name="Tian X."/>
            <person name="Jiao Y."/>
            <person name="Liang X."/>
            <person name="Jin J."/>
            <person name="Gao L."/>
            <person name="Zheng W."/>
            <person name="Hao B."/>
            <person name="Liu S.-M."/>
            <person name="Wang W."/>
            <person name="Yuan L."/>
            <person name="Cao M."/>
            <person name="McDermott J."/>
            <person name="Samudrala R."/>
            <person name="Wang J."/>
            <person name="Wong G.K.-S."/>
            <person name="Yang H."/>
        </authorList>
    </citation>
    <scope>NUCLEOTIDE SEQUENCE [LARGE SCALE GENOMIC DNA]</scope>
    <source>
        <strain>cv. Nipponbare</strain>
    </source>
</reference>
<reference key="6">
    <citation type="journal article" date="2003" name="Science">
        <title>Collection, mapping, and annotation of over 28,000 cDNA clones from japonica rice.</title>
        <authorList>
            <consortium name="The rice full-length cDNA consortium"/>
        </authorList>
    </citation>
    <scope>NUCLEOTIDE SEQUENCE [LARGE SCALE MRNA]</scope>
    <source>
        <strain>cv. Nipponbare</strain>
    </source>
</reference>
<feature type="signal peptide" evidence="2">
    <location>
        <begin position="1"/>
        <end position="22"/>
    </location>
</feature>
<feature type="chain" id="PRO_0000419909" description="Probable apyrase 3">
    <location>
        <begin position="23"/>
        <end position="451"/>
    </location>
</feature>
<feature type="active site" description="Proton acceptor" evidence="1">
    <location>
        <position position="169"/>
    </location>
</feature>
<feature type="binding site" evidence="3">
    <location>
        <begin position="47"/>
        <end position="57"/>
    </location>
    <ligand>
        <name>ATP</name>
        <dbReference type="ChEBI" id="CHEBI:30616"/>
    </ligand>
</feature>
<feature type="binding site" evidence="3">
    <location>
        <begin position="193"/>
        <end position="203"/>
    </location>
    <ligand>
        <name>ATP</name>
        <dbReference type="ChEBI" id="CHEBI:30616"/>
    </ligand>
</feature>
<feature type="glycosylation site" description="N-linked (GlcNAc...) asparagine" evidence="2">
    <location>
        <position position="275"/>
    </location>
</feature>
<feature type="glycosylation site" description="N-linked (GlcNAc...) asparagine" evidence="2">
    <location>
        <position position="315"/>
    </location>
</feature>
<feature type="sequence conflict" description="In Ref. 6; AK072692." evidence="3" ref="6">
    <original>P</original>
    <variation>S</variation>
    <location>
        <position position="225"/>
    </location>
</feature>
<dbReference type="EC" id="3.6.1.5"/>
<dbReference type="EMBL" id="DP000011">
    <property type="protein sequence ID" value="ABA95698.2"/>
    <property type="molecule type" value="Genomic_DNA"/>
</dbReference>
<dbReference type="EMBL" id="AP008218">
    <property type="protein sequence ID" value="BAF29051.1"/>
    <property type="molecule type" value="Genomic_DNA"/>
</dbReference>
<dbReference type="EMBL" id="AP014968">
    <property type="protein sequence ID" value="BAT15669.1"/>
    <property type="molecule type" value="Genomic_DNA"/>
</dbReference>
<dbReference type="EMBL" id="CM000149">
    <property type="protein sequence ID" value="EEE52674.1"/>
    <property type="molecule type" value="Genomic_DNA"/>
</dbReference>
<dbReference type="EMBL" id="AK072692">
    <property type="status" value="NOT_ANNOTATED_CDS"/>
    <property type="molecule type" value="mRNA"/>
</dbReference>
<dbReference type="SMR" id="Q2QYE1"/>
<dbReference type="FunCoup" id="Q2QYE1">
    <property type="interactions" value="2101"/>
</dbReference>
<dbReference type="STRING" id="39947.Q2QYE1"/>
<dbReference type="GlyCosmos" id="Q2QYE1">
    <property type="glycosylation" value="2 sites, No reported glycans"/>
</dbReference>
<dbReference type="PaxDb" id="39947-Q2QYE1"/>
<dbReference type="EnsemblPlants" id="Os12t0123500-01">
    <property type="protein sequence ID" value="Os12t0123500-01"/>
    <property type="gene ID" value="Os12g0123500"/>
</dbReference>
<dbReference type="Gramene" id="Os12t0123500-01">
    <property type="protein sequence ID" value="Os12t0123500-01"/>
    <property type="gene ID" value="Os12g0123500"/>
</dbReference>
<dbReference type="KEGG" id="dosa:Os12g0123500"/>
<dbReference type="eggNOG" id="KOG1385">
    <property type="taxonomic scope" value="Eukaryota"/>
</dbReference>
<dbReference type="HOGENOM" id="CLU_010246_0_0_1"/>
<dbReference type="InParanoid" id="Q2QYE1"/>
<dbReference type="OMA" id="ECREIAL"/>
<dbReference type="Proteomes" id="UP000000763">
    <property type="component" value="Chromosome 12"/>
</dbReference>
<dbReference type="Proteomes" id="UP000007752">
    <property type="component" value="Chromosome 12"/>
</dbReference>
<dbReference type="Proteomes" id="UP000059680">
    <property type="component" value="Chromosome 12"/>
</dbReference>
<dbReference type="GO" id="GO:0005576">
    <property type="term" value="C:extracellular region"/>
    <property type="evidence" value="ECO:0007669"/>
    <property type="project" value="UniProtKB-SubCell"/>
</dbReference>
<dbReference type="GO" id="GO:0016020">
    <property type="term" value="C:membrane"/>
    <property type="evidence" value="ECO:0000318"/>
    <property type="project" value="GO_Central"/>
</dbReference>
<dbReference type="GO" id="GO:0004050">
    <property type="term" value="F:apyrase activity"/>
    <property type="evidence" value="ECO:0007669"/>
    <property type="project" value="UniProtKB-EC"/>
</dbReference>
<dbReference type="GO" id="GO:0005524">
    <property type="term" value="F:ATP binding"/>
    <property type="evidence" value="ECO:0007669"/>
    <property type="project" value="UniProtKB-KW"/>
</dbReference>
<dbReference type="GO" id="GO:0017110">
    <property type="term" value="F:nucleoside diphosphate phosphatase activity"/>
    <property type="evidence" value="ECO:0000318"/>
    <property type="project" value="GO_Central"/>
</dbReference>
<dbReference type="GO" id="GO:0009134">
    <property type="term" value="P:nucleoside diphosphate catabolic process"/>
    <property type="evidence" value="ECO:0000318"/>
    <property type="project" value="GO_Central"/>
</dbReference>
<dbReference type="Gene3D" id="3.30.420.40">
    <property type="match status" value="1"/>
</dbReference>
<dbReference type="Gene3D" id="3.30.420.150">
    <property type="entry name" value="Exopolyphosphatase. Domain 2"/>
    <property type="match status" value="1"/>
</dbReference>
<dbReference type="InterPro" id="IPR000407">
    <property type="entry name" value="GDA1_CD39_NTPase"/>
</dbReference>
<dbReference type="PANTHER" id="PTHR11782">
    <property type="entry name" value="ADENOSINE/GUANOSINE DIPHOSPHATASE"/>
    <property type="match status" value="1"/>
</dbReference>
<dbReference type="PANTHER" id="PTHR11782:SF82">
    <property type="entry name" value="APYRASE 3-RELATED"/>
    <property type="match status" value="1"/>
</dbReference>
<dbReference type="Pfam" id="PF01150">
    <property type="entry name" value="GDA1_CD39"/>
    <property type="match status" value="1"/>
</dbReference>
<dbReference type="PROSITE" id="PS01238">
    <property type="entry name" value="GDA1_CD39_NTPASE"/>
    <property type="match status" value="1"/>
</dbReference>
<sequence>MAADHLVVAMLLLLALSPPAVADDTAVLGRKGGVVEGQAAGPGRYAVILDAGSTGTRVHVFRFDNKLDLLKVGDNIELFAKVDPGLSSYAGRPQDAANSILPLLDKANTVVPARLMNKTPLKLGATAGLRLIGDEKANQILEAVRDVVHTKSKYQYNPNWINVLEGSQEGSYIWVALNYLLDKLGGDYSKTVGVVDLGGGSVQMAYAISSNTAATAPKVPEGKDPYVVKEYLKGKDYNIYVHSYLHYGGFASRAHILERKDGPFSNCMLRGFSGNFTYNGKQYDATAAPQGADYHKCREEVVKLLKVNAPCETKNCSFNGVWNGGGGAGQDDLYVASAFYYIASHVGFINSDAPSAKSTPATFKAVAEKVCKLSVKEAKVEYPNVRDHAYLCMDLIYEYSLLVDGFGLHPSKEITLVDKVKHGEYYIDAAWPLGTAIEAVSPKKRLREIYK</sequence>
<evidence type="ECO:0000250" key="1"/>
<evidence type="ECO:0000255" key="2"/>
<evidence type="ECO:0000305" key="3"/>
<gene>
    <name type="primary">APY3</name>
    <name type="ordered locus">Os12g0123500</name>
    <name type="ordered locus">LOC_Os12g02980</name>
    <name type="ORF">OsJ_35056</name>
</gene>
<comment type="function">
    <text evidence="1">Catalyzes the hydrolysis of phosphoanhydride bonds of nucleoside tri- and di-phosphates.</text>
</comment>
<comment type="catalytic activity">
    <reaction>
        <text>a ribonucleoside 5'-triphosphate + 2 H2O = a ribonucleoside 5'-phosphate + 2 phosphate + 2 H(+)</text>
        <dbReference type="Rhea" id="RHEA:36795"/>
        <dbReference type="ChEBI" id="CHEBI:15377"/>
        <dbReference type="ChEBI" id="CHEBI:15378"/>
        <dbReference type="ChEBI" id="CHEBI:43474"/>
        <dbReference type="ChEBI" id="CHEBI:58043"/>
        <dbReference type="ChEBI" id="CHEBI:61557"/>
        <dbReference type="EC" id="3.6.1.5"/>
    </reaction>
</comment>
<comment type="cofactor">
    <cofactor evidence="1">
        <name>Ca(2+)</name>
        <dbReference type="ChEBI" id="CHEBI:29108"/>
    </cofactor>
</comment>
<comment type="subcellular location">
    <subcellularLocation>
        <location evidence="3">Secreted</location>
    </subcellularLocation>
</comment>
<comment type="similarity">
    <text evidence="3">Belongs to the GDA1/CD39 NTPase family.</text>
</comment>
<proteinExistence type="evidence at transcript level"/>